<gene>
    <name type="ordered locus">SPC_2630</name>
</gene>
<name>NQOR_SALPC</name>
<evidence type="ECO:0000255" key="1">
    <source>
        <dbReference type="HAMAP-Rule" id="MF_01017"/>
    </source>
</evidence>
<comment type="catalytic activity">
    <reaction evidence="1">
        <text>a quinone + NADH + H(+) = a quinol + NAD(+)</text>
        <dbReference type="Rhea" id="RHEA:46160"/>
        <dbReference type="ChEBI" id="CHEBI:15378"/>
        <dbReference type="ChEBI" id="CHEBI:24646"/>
        <dbReference type="ChEBI" id="CHEBI:57540"/>
        <dbReference type="ChEBI" id="CHEBI:57945"/>
        <dbReference type="ChEBI" id="CHEBI:132124"/>
        <dbReference type="EC" id="1.6.5.2"/>
    </reaction>
</comment>
<comment type="catalytic activity">
    <reaction evidence="1">
        <text>a quinone + NADPH + H(+) = a quinol + NADP(+)</text>
        <dbReference type="Rhea" id="RHEA:46164"/>
        <dbReference type="ChEBI" id="CHEBI:15378"/>
        <dbReference type="ChEBI" id="CHEBI:24646"/>
        <dbReference type="ChEBI" id="CHEBI:57783"/>
        <dbReference type="ChEBI" id="CHEBI:58349"/>
        <dbReference type="ChEBI" id="CHEBI:132124"/>
        <dbReference type="EC" id="1.6.5.2"/>
    </reaction>
</comment>
<comment type="cofactor">
    <cofactor evidence="1">
        <name>FMN</name>
        <dbReference type="ChEBI" id="CHEBI:58210"/>
    </cofactor>
    <text evidence="1">Binds 1 FMN per monomer.</text>
</comment>
<comment type="similarity">
    <text evidence="1">Belongs to the WrbA family.</text>
</comment>
<dbReference type="EC" id="1.6.5.2" evidence="1"/>
<dbReference type="EMBL" id="CP000857">
    <property type="protein sequence ID" value="ACN46731.1"/>
    <property type="molecule type" value="Genomic_DNA"/>
</dbReference>
<dbReference type="SMR" id="C0Q886"/>
<dbReference type="KEGG" id="sei:SPC_2630"/>
<dbReference type="HOGENOM" id="CLU_051402_0_2_6"/>
<dbReference type="Proteomes" id="UP000001599">
    <property type="component" value="Chromosome"/>
</dbReference>
<dbReference type="GO" id="GO:0016020">
    <property type="term" value="C:membrane"/>
    <property type="evidence" value="ECO:0007669"/>
    <property type="project" value="TreeGrafter"/>
</dbReference>
<dbReference type="GO" id="GO:0050660">
    <property type="term" value="F:flavin adenine dinucleotide binding"/>
    <property type="evidence" value="ECO:0007669"/>
    <property type="project" value="UniProtKB-UniRule"/>
</dbReference>
<dbReference type="GO" id="GO:0010181">
    <property type="term" value="F:FMN binding"/>
    <property type="evidence" value="ECO:0007669"/>
    <property type="project" value="InterPro"/>
</dbReference>
<dbReference type="GO" id="GO:0051287">
    <property type="term" value="F:NAD binding"/>
    <property type="evidence" value="ECO:0007669"/>
    <property type="project" value="UniProtKB-UniRule"/>
</dbReference>
<dbReference type="GO" id="GO:0050136">
    <property type="term" value="F:NADH:ubiquinone reductase (non-electrogenic) activity"/>
    <property type="evidence" value="ECO:0007669"/>
    <property type="project" value="RHEA"/>
</dbReference>
<dbReference type="GO" id="GO:0050661">
    <property type="term" value="F:NADP binding"/>
    <property type="evidence" value="ECO:0007669"/>
    <property type="project" value="UniProtKB-UniRule"/>
</dbReference>
<dbReference type="GO" id="GO:0008753">
    <property type="term" value="F:NADPH dehydrogenase (quinone) activity"/>
    <property type="evidence" value="ECO:0007669"/>
    <property type="project" value="RHEA"/>
</dbReference>
<dbReference type="FunFam" id="3.40.50.360:FF:000004">
    <property type="entry name" value="NAD(P)H dehydrogenase (quinone)"/>
    <property type="match status" value="1"/>
</dbReference>
<dbReference type="Gene3D" id="3.40.50.360">
    <property type="match status" value="1"/>
</dbReference>
<dbReference type="HAMAP" id="MF_01017">
    <property type="entry name" value="NQOR"/>
    <property type="match status" value="1"/>
</dbReference>
<dbReference type="InterPro" id="IPR008254">
    <property type="entry name" value="Flavodoxin/NO_synth"/>
</dbReference>
<dbReference type="InterPro" id="IPR029039">
    <property type="entry name" value="Flavoprotein-like_sf"/>
</dbReference>
<dbReference type="InterPro" id="IPR010089">
    <property type="entry name" value="Flavoprotein_WrbA-like"/>
</dbReference>
<dbReference type="InterPro" id="IPR005025">
    <property type="entry name" value="FMN_Rdtase-like_dom"/>
</dbReference>
<dbReference type="InterPro" id="IPR037513">
    <property type="entry name" value="NQO"/>
</dbReference>
<dbReference type="NCBIfam" id="TIGR01755">
    <property type="entry name" value="flav_wrbA"/>
    <property type="match status" value="1"/>
</dbReference>
<dbReference type="NCBIfam" id="NF002999">
    <property type="entry name" value="PRK03767.1"/>
    <property type="match status" value="1"/>
</dbReference>
<dbReference type="PANTHER" id="PTHR30546">
    <property type="entry name" value="FLAVODOXIN-RELATED PROTEIN WRBA-RELATED"/>
    <property type="match status" value="1"/>
</dbReference>
<dbReference type="PANTHER" id="PTHR30546:SF23">
    <property type="entry name" value="FLAVOPROTEIN-LIKE PROTEIN YCP4-RELATED"/>
    <property type="match status" value="1"/>
</dbReference>
<dbReference type="Pfam" id="PF03358">
    <property type="entry name" value="FMN_red"/>
    <property type="match status" value="1"/>
</dbReference>
<dbReference type="SUPFAM" id="SSF52218">
    <property type="entry name" value="Flavoproteins"/>
    <property type="match status" value="1"/>
</dbReference>
<dbReference type="PROSITE" id="PS50902">
    <property type="entry name" value="FLAVODOXIN_LIKE"/>
    <property type="match status" value="1"/>
</dbReference>
<keyword id="KW-0285">Flavoprotein</keyword>
<keyword id="KW-0288">FMN</keyword>
<keyword id="KW-0520">NAD</keyword>
<keyword id="KW-0521">NADP</keyword>
<keyword id="KW-0547">Nucleotide-binding</keyword>
<keyword id="KW-0560">Oxidoreductase</keyword>
<reference key="1">
    <citation type="journal article" date="2009" name="PLoS ONE">
        <title>Salmonella paratyphi C: genetic divergence from Salmonella choleraesuis and pathogenic convergence with Salmonella typhi.</title>
        <authorList>
            <person name="Liu W.-Q."/>
            <person name="Feng Y."/>
            <person name="Wang Y."/>
            <person name="Zou Q.-H."/>
            <person name="Chen F."/>
            <person name="Guo J.-T."/>
            <person name="Peng Y.-H."/>
            <person name="Jin Y."/>
            <person name="Li Y.-G."/>
            <person name="Hu S.-N."/>
            <person name="Johnston R.N."/>
            <person name="Liu G.-R."/>
            <person name="Liu S.-L."/>
        </authorList>
    </citation>
    <scope>NUCLEOTIDE SEQUENCE [LARGE SCALE GENOMIC DNA]</scope>
    <source>
        <strain>RKS4594</strain>
    </source>
</reference>
<organism>
    <name type="scientific">Salmonella paratyphi C (strain RKS4594)</name>
    <dbReference type="NCBI Taxonomy" id="476213"/>
    <lineage>
        <taxon>Bacteria</taxon>
        <taxon>Pseudomonadati</taxon>
        <taxon>Pseudomonadota</taxon>
        <taxon>Gammaproteobacteria</taxon>
        <taxon>Enterobacterales</taxon>
        <taxon>Enterobacteriaceae</taxon>
        <taxon>Salmonella</taxon>
    </lineage>
</organism>
<accession>C0Q886</accession>
<protein>
    <recommendedName>
        <fullName evidence="1">NAD(P)H dehydrogenase (quinone)</fullName>
        <ecNumber evidence="1">1.6.5.2</ecNumber>
    </recommendedName>
    <alternativeName>
        <fullName>Flavoprotein WrbA</fullName>
    </alternativeName>
    <alternativeName>
        <fullName evidence="1">NAD(P)H:quinone oxidoreductase</fullName>
        <shortName evidence="1">NQO</shortName>
    </alternativeName>
</protein>
<feature type="chain" id="PRO_1000149014" description="NAD(P)H dehydrogenase (quinone)">
    <location>
        <begin position="1"/>
        <end position="198"/>
    </location>
</feature>
<feature type="domain" description="Flavodoxin-like" evidence="1">
    <location>
        <begin position="4"/>
        <end position="189"/>
    </location>
</feature>
<feature type="binding site" evidence="1">
    <location>
        <begin position="10"/>
        <end position="15"/>
    </location>
    <ligand>
        <name>FMN</name>
        <dbReference type="ChEBI" id="CHEBI:58210"/>
    </ligand>
</feature>
<feature type="binding site" evidence="1">
    <location>
        <position position="12"/>
    </location>
    <ligand>
        <name>NAD(+)</name>
        <dbReference type="ChEBI" id="CHEBI:57540"/>
    </ligand>
</feature>
<feature type="binding site" evidence="1">
    <location>
        <begin position="78"/>
        <end position="80"/>
    </location>
    <ligand>
        <name>FMN</name>
        <dbReference type="ChEBI" id="CHEBI:58210"/>
    </ligand>
</feature>
<feature type="binding site" evidence="1">
    <location>
        <position position="98"/>
    </location>
    <ligand>
        <name>substrate</name>
    </ligand>
</feature>
<feature type="binding site" evidence="1">
    <location>
        <begin position="113"/>
        <end position="118"/>
    </location>
    <ligand>
        <name>FMN</name>
        <dbReference type="ChEBI" id="CHEBI:58210"/>
    </ligand>
</feature>
<feature type="binding site" evidence="1">
    <location>
        <position position="133"/>
    </location>
    <ligand>
        <name>FMN</name>
        <dbReference type="ChEBI" id="CHEBI:58210"/>
    </ligand>
</feature>
<proteinExistence type="inferred from homology"/>
<sequence length="198" mass="20868">MAKILVLYYSMYGHIETMAHAVAEGAKKVDGAEVIIKRVPETMPPEIFAKAGGKTQNAPVATPQELADYDAIIFGTPTRFGNMSGQMRTFLDQTGGLWASGSLYGKLGSVFSSTGTGGGQEQTITSTWTTLAHHGMVIVPIGYAAQELFDVSQVRGGTPYGATTIAGGDGSRQPSQEELSIARYQGEYVAGLAVKLNG</sequence>